<sequence>MAESVASSESLPQMKPEEPESKKSPSREAIPKDMPVVNVRDIMMYVENMEGMENKKLIPYVVYLDEQFKEIVQKRRKDARVVFIFMIAIMSMLVIGLVVCGVKLLGYLMEQK</sequence>
<reference key="1">
    <citation type="journal article" date="2001" name="Nature">
        <title>Genome sequence and gene compaction of the eukaryote parasite Encephalitozoon cuniculi.</title>
        <authorList>
            <person name="Katinka M.D."/>
            <person name="Duprat S."/>
            <person name="Cornillot E."/>
            <person name="Metenier G."/>
            <person name="Thomarat F."/>
            <person name="Prensier G."/>
            <person name="Barbe V."/>
            <person name="Peyretaillade E."/>
            <person name="Brottier P."/>
            <person name="Wincker P."/>
            <person name="Delbac F."/>
            <person name="El Alaoui H."/>
            <person name="Peyret P."/>
            <person name="Saurin W."/>
            <person name="Gouy M."/>
            <person name="Weissenbach J."/>
            <person name="Vivares C.P."/>
        </authorList>
    </citation>
    <scope>NUCLEOTIDE SEQUENCE [LARGE SCALE GENOMIC DNA]</scope>
    <source>
        <strain>GB-M1</strain>
    </source>
</reference>
<reference key="2">
    <citation type="journal article" date="2006" name="Proteomics">
        <title>Proteomic analysis of the eukaryotic parasite Encephalitozoon cuniculi (microsporidia): a reference map for proteins expressed in late sporogonial stages.</title>
        <authorList>
            <person name="Brosson D."/>
            <person name="Kuhn L."/>
            <person name="Delbac F."/>
            <person name="Garin J."/>
            <person name="Vivares C.P."/>
            <person name="Texier C."/>
        </authorList>
    </citation>
    <scope>IDENTIFICATION BY MASS SPECTROMETRY [LARGE SCALE ANALYSIS]</scope>
    <scope>DEVELOPMENTAL STAGE</scope>
</reference>
<name>Y4A8_ENCCU</name>
<accession>Q8SVT0</accession>
<proteinExistence type="evidence at protein level"/>
<evidence type="ECO:0000255" key="1"/>
<evidence type="ECO:0000256" key="2">
    <source>
        <dbReference type="SAM" id="MobiDB-lite"/>
    </source>
</evidence>
<evidence type="ECO:0000269" key="3">
    <source>
    </source>
</evidence>
<evidence type="ECO:0000305" key="4"/>
<comment type="subcellular location">
    <subcellularLocation>
        <location evidence="4">Membrane</location>
        <topology evidence="4">Single-pass membrane protein</topology>
    </subcellularLocation>
</comment>
<comment type="developmental stage">
    <text evidence="3">Expressed in late sporogonial stages.</text>
</comment>
<protein>
    <recommendedName>
        <fullName>Uncharacterized membrane protein ECU04_1080</fullName>
    </recommendedName>
</protein>
<organism>
    <name type="scientific">Encephalitozoon cuniculi (strain GB-M1)</name>
    <name type="common">Microsporidian parasite</name>
    <dbReference type="NCBI Taxonomy" id="284813"/>
    <lineage>
        <taxon>Eukaryota</taxon>
        <taxon>Fungi</taxon>
        <taxon>Fungi incertae sedis</taxon>
        <taxon>Microsporidia</taxon>
        <taxon>Unikaryonidae</taxon>
        <taxon>Encephalitozoon</taxon>
    </lineage>
</organism>
<keyword id="KW-0472">Membrane</keyword>
<keyword id="KW-1185">Reference proteome</keyword>
<keyword id="KW-0812">Transmembrane</keyword>
<keyword id="KW-1133">Transmembrane helix</keyword>
<gene>
    <name type="ordered locus">ECU04_1080</name>
</gene>
<feature type="chain" id="PRO_0000382768" description="Uncharacterized membrane protein ECU04_1080">
    <location>
        <begin position="1"/>
        <end position="112"/>
    </location>
</feature>
<feature type="transmembrane region" description="Helical" evidence="1">
    <location>
        <begin position="81"/>
        <end position="101"/>
    </location>
</feature>
<feature type="region of interest" description="Disordered" evidence="2">
    <location>
        <begin position="1"/>
        <end position="32"/>
    </location>
</feature>
<feature type="compositionally biased region" description="Polar residues" evidence="2">
    <location>
        <begin position="1"/>
        <end position="11"/>
    </location>
</feature>
<feature type="compositionally biased region" description="Basic and acidic residues" evidence="2">
    <location>
        <begin position="15"/>
        <end position="31"/>
    </location>
</feature>
<dbReference type="EMBL" id="AL590444">
    <property type="protein sequence ID" value="CAD25296.1"/>
    <property type="molecule type" value="Genomic_DNA"/>
</dbReference>
<dbReference type="RefSeq" id="NP_584792.1">
    <property type="nucleotide sequence ID" value="NM_001041142.1"/>
</dbReference>
<dbReference type="SMR" id="Q8SVT0"/>
<dbReference type="GeneID" id="858940"/>
<dbReference type="KEGG" id="ecu:ECU04_1080"/>
<dbReference type="VEuPathDB" id="MicrosporidiaDB:ECU04_1080"/>
<dbReference type="HOGENOM" id="CLU_2121042_0_0_1"/>
<dbReference type="InParanoid" id="Q8SVT0"/>
<dbReference type="OrthoDB" id="2190934at2759"/>
<dbReference type="Proteomes" id="UP000000819">
    <property type="component" value="Chromosome IV"/>
</dbReference>
<dbReference type="GO" id="GO:0016020">
    <property type="term" value="C:membrane"/>
    <property type="evidence" value="ECO:0007669"/>
    <property type="project" value="UniProtKB-SubCell"/>
</dbReference>